<proteinExistence type="evidence at protein level"/>
<name>M4GDB_DANRE</name>
<evidence type="ECO:0000250" key="1"/>
<evidence type="ECO:0000305" key="2"/>
<evidence type="ECO:0007829" key="3">
    <source>
        <dbReference type="PDB" id="2I2O"/>
    </source>
</evidence>
<evidence type="ECO:0007829" key="4">
    <source>
        <dbReference type="PDB" id="4JHJ"/>
    </source>
</evidence>
<protein>
    <recommendedName>
        <fullName>MIF4G domain-containing protein B</fullName>
    </recommendedName>
</protein>
<organism>
    <name type="scientific">Danio rerio</name>
    <name type="common">Zebrafish</name>
    <name type="synonym">Brachydanio rerio</name>
    <dbReference type="NCBI Taxonomy" id="7955"/>
    <lineage>
        <taxon>Eukaryota</taxon>
        <taxon>Metazoa</taxon>
        <taxon>Chordata</taxon>
        <taxon>Craniata</taxon>
        <taxon>Vertebrata</taxon>
        <taxon>Euteleostomi</taxon>
        <taxon>Actinopterygii</taxon>
        <taxon>Neopterygii</taxon>
        <taxon>Teleostei</taxon>
        <taxon>Ostariophysi</taxon>
        <taxon>Cypriniformes</taxon>
        <taxon>Danionidae</taxon>
        <taxon>Danioninae</taxon>
        <taxon>Danio</taxon>
    </lineage>
</organism>
<comment type="function">
    <text evidence="1">Functions in replication-dependent translation of histone mRNAs which differ from other eukaryotic mRNAs in that they do not end with a poly-A tail but a stem-loop. May participate in circularizing those mRNAs specifically enhancing their translation (By similarity).</text>
</comment>
<comment type="subunit">
    <text evidence="1">Interacts with eif4g1, eif4g2 and slbp; probably tethered by SLBP to the 3'-end of mRNAs ending with the histone stem-loop, it also interacts with eif4g1 which is bound to their 5'-end.</text>
</comment>
<comment type="interaction">
    <interactant intactId="EBI-16419713">
        <id>Q5EAQ1</id>
    </interactant>
    <interactant intactId="EBI-16419754">
        <id>Q7ZU28</id>
        <label>ddx19b</label>
    </interactant>
    <organismsDiffer>false</organismsDiffer>
    <experiments>2</experiments>
</comment>
<comment type="interaction">
    <interactant intactId="EBI-16419713">
        <id>Q5EAQ1</id>
    </interactant>
    <interactant intactId="EBI-16419713">
        <id>Q5EAQ1</id>
        <label>mif4gdb</label>
    </interactant>
    <organismsDiffer>false</organismsDiffer>
    <experiments>2</experiments>
</comment>
<comment type="subcellular location">
    <subcellularLocation>
        <location evidence="1">Cytoplasm</location>
    </subcellularLocation>
    <subcellularLocation>
        <location evidence="1">Nucleus</location>
    </subcellularLocation>
</comment>
<comment type="similarity">
    <text evidence="2">Belongs to the MIF4GD family.</text>
</comment>
<gene>
    <name type="primary">mif4gdb</name>
    <name type="ORF">zgc:110826</name>
</gene>
<reference key="1">
    <citation type="submission" date="2005-02" db="EMBL/GenBank/DDBJ databases">
        <authorList>
            <consortium name="NIH - Zebrafish Gene Collection (ZGC) project"/>
        </authorList>
    </citation>
    <scope>NUCLEOTIDE SEQUENCE [LARGE SCALE MRNA]</scope>
    <source>
        <tissue>Embryo</tissue>
    </source>
</reference>
<reference key="2">
    <citation type="submission" date="2006-08" db="PDB data bank">
        <title>Crystal structure of an EIF4G-like protein from Danio rerio.</title>
        <authorList>
            <consortium name="Center for eukaryotic structural genomics (CESG)"/>
        </authorList>
    </citation>
    <scope>X-RAY CRYSTALLOGRAPHY (1.92 ANGSTROMS)</scope>
</reference>
<sequence>MENSSKEDYKIQSFDLETQKLLKTALKDPGSVDLEKVSSVIVDQSLKDQVFSREAGRICYTIVQAEAKQTNGSVFRRNLLNRLQQEFKAREETRKRSTQEWVCLVSFICNIFDYLKVNNMPMVALVHPVYDCLFRLAQSDALKNEEEVDCLVLQLHRIGDQLEKMNVQLMDELFNLLRDGFLLQEDLSSMGRLLLLEILEFRAGGWKLSDTAQKYYYSEVTD</sequence>
<dbReference type="EMBL" id="BC090306">
    <property type="protein sequence ID" value="AAH90306.1"/>
    <property type="molecule type" value="mRNA"/>
</dbReference>
<dbReference type="RefSeq" id="NP_001013302.1">
    <property type="nucleotide sequence ID" value="NM_001013284.1"/>
</dbReference>
<dbReference type="PDB" id="2I2O">
    <property type="method" value="X-ray"/>
    <property type="resolution" value="1.92 A"/>
    <property type="chains" value="A/B=2-222"/>
</dbReference>
<dbReference type="PDB" id="4JHJ">
    <property type="method" value="X-ray"/>
    <property type="resolution" value="3.25 A"/>
    <property type="chains" value="A/B=1-222"/>
</dbReference>
<dbReference type="PDB" id="4JHK">
    <property type="method" value="X-ray"/>
    <property type="resolution" value="2.51 A"/>
    <property type="chains" value="A=1-222"/>
</dbReference>
<dbReference type="PDBsum" id="2I2O"/>
<dbReference type="PDBsum" id="4JHJ"/>
<dbReference type="PDBsum" id="4JHK"/>
<dbReference type="SMR" id="Q5EAQ1"/>
<dbReference type="ComplexPortal" id="CPX-1305">
    <property type="entry name" value="SLBP-SLIP1 complex"/>
</dbReference>
<dbReference type="FunCoup" id="Q5EAQ1">
    <property type="interactions" value="815"/>
</dbReference>
<dbReference type="IntAct" id="Q5EAQ1">
    <property type="interactions" value="2"/>
</dbReference>
<dbReference type="STRING" id="7955.ENSDARP00000141567"/>
<dbReference type="PaxDb" id="7955-ENSDARP00000124808"/>
<dbReference type="DNASU" id="503596"/>
<dbReference type="Ensembl" id="ENSDART00000168938">
    <property type="protein sequence ID" value="ENSDARP00000141567"/>
    <property type="gene ID" value="ENSDARG00000102578"/>
</dbReference>
<dbReference type="GeneID" id="503596"/>
<dbReference type="KEGG" id="dre:503596"/>
<dbReference type="AGR" id="ZFIN:ZDB-GENE-050227-7"/>
<dbReference type="CTD" id="503596"/>
<dbReference type="ZFIN" id="ZDB-GENE-050227-7">
    <property type="gene designation" value="mif4gdb"/>
</dbReference>
<dbReference type="eggNOG" id="KOG3942">
    <property type="taxonomic scope" value="Eukaryota"/>
</dbReference>
<dbReference type="HOGENOM" id="CLU_081010_1_0_1"/>
<dbReference type="InParanoid" id="Q5EAQ1"/>
<dbReference type="OMA" id="PCCSCTG"/>
<dbReference type="OrthoDB" id="6357832at2759"/>
<dbReference type="PhylomeDB" id="Q5EAQ1"/>
<dbReference type="EvolutionaryTrace" id="Q5EAQ1"/>
<dbReference type="PRO" id="PR:Q5EAQ1"/>
<dbReference type="Proteomes" id="UP000000437">
    <property type="component" value="Chromosome 3"/>
</dbReference>
<dbReference type="Bgee" id="ENSDARG00000102578">
    <property type="expression patterns" value="Expressed in testis and 19 other cell types or tissues"/>
</dbReference>
<dbReference type="GO" id="GO:0005737">
    <property type="term" value="C:cytoplasm"/>
    <property type="evidence" value="ECO:0000303"/>
    <property type="project" value="ComplexPortal"/>
</dbReference>
<dbReference type="GO" id="GO:0005829">
    <property type="term" value="C:cytosol"/>
    <property type="evidence" value="ECO:0000318"/>
    <property type="project" value="GO_Central"/>
</dbReference>
<dbReference type="GO" id="GO:0062073">
    <property type="term" value="C:histone mRNA stem-loop binding complex"/>
    <property type="evidence" value="ECO:0000353"/>
    <property type="project" value="ComplexPortal"/>
</dbReference>
<dbReference type="GO" id="GO:0005634">
    <property type="term" value="C:nucleus"/>
    <property type="evidence" value="ECO:0007669"/>
    <property type="project" value="UniProtKB-SubCell"/>
</dbReference>
<dbReference type="GO" id="GO:0042802">
    <property type="term" value="F:identical protein binding"/>
    <property type="evidence" value="ECO:0000353"/>
    <property type="project" value="IntAct"/>
</dbReference>
<dbReference type="GO" id="GO:0003723">
    <property type="term" value="F:RNA binding"/>
    <property type="evidence" value="ECO:0007669"/>
    <property type="project" value="InterPro"/>
</dbReference>
<dbReference type="GO" id="GO:0008494">
    <property type="term" value="F:translation activator activity"/>
    <property type="evidence" value="ECO:0000318"/>
    <property type="project" value="GO_Central"/>
</dbReference>
<dbReference type="GO" id="GO:0002191">
    <property type="term" value="P:cap-dependent translational initiation"/>
    <property type="evidence" value="ECO:0000266"/>
    <property type="project" value="ComplexPortal"/>
</dbReference>
<dbReference type="GO" id="GO:0006446">
    <property type="term" value="P:regulation of translational initiation"/>
    <property type="evidence" value="ECO:0000318"/>
    <property type="project" value="GO_Central"/>
</dbReference>
<dbReference type="FunFam" id="1.25.40.180:FF:000025">
    <property type="entry name" value="MIF4G domain containing a"/>
    <property type="match status" value="1"/>
</dbReference>
<dbReference type="Gene3D" id="1.25.40.180">
    <property type="match status" value="1"/>
</dbReference>
<dbReference type="InterPro" id="IPR016024">
    <property type="entry name" value="ARM-type_fold"/>
</dbReference>
<dbReference type="InterPro" id="IPR003890">
    <property type="entry name" value="MIF4G-like_typ-3"/>
</dbReference>
<dbReference type="InterPro" id="IPR051367">
    <property type="entry name" value="mRNA_TranslReg/HistoneTransl"/>
</dbReference>
<dbReference type="PANTHER" id="PTHR23254">
    <property type="entry name" value="EIF4G DOMAIN PROTEIN"/>
    <property type="match status" value="1"/>
</dbReference>
<dbReference type="PANTHER" id="PTHR23254:SF17">
    <property type="entry name" value="MIF4G DOMAIN-CONTAINING PROTEIN"/>
    <property type="match status" value="1"/>
</dbReference>
<dbReference type="Pfam" id="PF02854">
    <property type="entry name" value="MIF4G"/>
    <property type="match status" value="1"/>
</dbReference>
<dbReference type="SMART" id="SM00543">
    <property type="entry name" value="MIF4G"/>
    <property type="match status" value="1"/>
</dbReference>
<dbReference type="SUPFAM" id="SSF48371">
    <property type="entry name" value="ARM repeat"/>
    <property type="match status" value="1"/>
</dbReference>
<keyword id="KW-0002">3D-structure</keyword>
<keyword id="KW-0963">Cytoplasm</keyword>
<keyword id="KW-0539">Nucleus</keyword>
<keyword id="KW-1185">Reference proteome</keyword>
<keyword id="KW-0810">Translation regulation</keyword>
<feature type="chain" id="PRO_0000337092" description="MIF4G domain-containing protein B">
    <location>
        <begin position="1"/>
        <end position="222"/>
    </location>
</feature>
<feature type="domain" description="MIF4G">
    <location>
        <begin position="3"/>
        <end position="205"/>
    </location>
</feature>
<feature type="helix" evidence="4">
    <location>
        <begin position="11"/>
        <end position="13"/>
    </location>
</feature>
<feature type="helix" evidence="3">
    <location>
        <begin position="16"/>
        <end position="27"/>
    </location>
</feature>
<feature type="helix" evidence="3">
    <location>
        <begin position="29"/>
        <end position="31"/>
    </location>
</feature>
<feature type="helix" evidence="3">
    <location>
        <begin position="34"/>
        <end position="45"/>
    </location>
</feature>
<feature type="helix" evidence="3">
    <location>
        <begin position="49"/>
        <end position="54"/>
    </location>
</feature>
<feature type="helix" evidence="3">
    <location>
        <begin position="56"/>
        <end position="70"/>
    </location>
</feature>
<feature type="helix" evidence="3">
    <location>
        <begin position="74"/>
        <end position="88"/>
    </location>
</feature>
<feature type="helix" evidence="3">
    <location>
        <begin position="90"/>
        <end position="96"/>
    </location>
</feature>
<feature type="helix" evidence="3">
    <location>
        <begin position="98"/>
        <end position="114"/>
    </location>
</feature>
<feature type="helix" evidence="3">
    <location>
        <begin position="123"/>
        <end position="125"/>
    </location>
</feature>
<feature type="helix" evidence="3">
    <location>
        <begin position="126"/>
        <end position="136"/>
    </location>
</feature>
<feature type="helix" evidence="3">
    <location>
        <begin position="139"/>
        <end position="142"/>
    </location>
</feature>
<feature type="helix" evidence="3">
    <location>
        <begin position="145"/>
        <end position="165"/>
    </location>
</feature>
<feature type="helix" evidence="3">
    <location>
        <begin position="167"/>
        <end position="183"/>
    </location>
</feature>
<feature type="helix" evidence="3">
    <location>
        <begin position="189"/>
        <end position="203"/>
    </location>
</feature>
<feature type="helix" evidence="3">
    <location>
        <begin position="210"/>
        <end position="216"/>
    </location>
</feature>
<accession>Q5EAQ1</accession>